<comment type="function">
    <text evidence="1">Produces ATP from ADP in the presence of a proton gradient across the membrane. The catalytic sites are hosted primarily by the beta subunits.</text>
</comment>
<comment type="catalytic activity">
    <reaction evidence="1">
        <text>ATP + H2O + 4 H(+)(in) = ADP + phosphate + 5 H(+)(out)</text>
        <dbReference type="Rhea" id="RHEA:57720"/>
        <dbReference type="ChEBI" id="CHEBI:15377"/>
        <dbReference type="ChEBI" id="CHEBI:15378"/>
        <dbReference type="ChEBI" id="CHEBI:30616"/>
        <dbReference type="ChEBI" id="CHEBI:43474"/>
        <dbReference type="ChEBI" id="CHEBI:456216"/>
        <dbReference type="EC" id="7.1.2.2"/>
    </reaction>
</comment>
<comment type="subunit">
    <text evidence="1">F-type ATPases have 2 components, CF(1) - the catalytic core - and CF(0) - the membrane proton channel. CF(1) has five subunits: alpha(3), beta(3), gamma(1), delta(1), epsilon(1). CF(0) has three main subunits: a(1), b(2) and c(9-12). The alpha and beta chains form an alternating ring which encloses part of the gamma chain. CF(1) is attached to CF(0) by a central stalk formed by the gamma and epsilon chains, while a peripheral stalk is formed by the delta and b chains.</text>
</comment>
<comment type="subcellular location">
    <subcellularLocation>
        <location evidence="1">Cell membrane</location>
        <topology evidence="1">Peripheral membrane protein</topology>
    </subcellularLocation>
</comment>
<comment type="similarity">
    <text evidence="1">Belongs to the ATPase alpha/beta chains family.</text>
</comment>
<proteinExistence type="inferred from homology"/>
<sequence>MKKNTGTIISISGFVLKIEFNESELPEIGFALEYHTHQGTYLAEVVQHTGINTVSAIAIGEVSGLARGTEVVNLGHPIEVPVGETVQGRMLNVYGKAIDGKPEPAAEVKWPIFRDQPLLRELDTNKEILYTGIKVIDLICPILKGGKTGLFGGAGVGKSVLMQELINNISMLGGNSVFTGVGERVREGIGLYKELEASGVLPQTTVVLGQMNESPGVRMRVALTGLTIAEYLRDEEKKDVLLFIDNVFRFIQAGSEVSSLQGKIPITGGYQSTLSKEVGDFQDRIASTKNGSITSIQCVFLPADDIDDPSAVATFSHLDSTIVLERSIAALGIFPAVNPLQSFSRALNPTFVGERHYQLAAQVKFILQRYMELQEIINVLGMAELSDEDRKLVHRARKIRNFLSQPFYVSEKFTGTEGTFVEIEDLLGSIERILNGDYDERSERDFLFIGSYKDLK</sequence>
<evidence type="ECO:0000255" key="1">
    <source>
        <dbReference type="HAMAP-Rule" id="MF_01347"/>
    </source>
</evidence>
<keyword id="KW-0066">ATP synthesis</keyword>
<keyword id="KW-0067">ATP-binding</keyword>
<keyword id="KW-1003">Cell membrane</keyword>
<keyword id="KW-0139">CF(1)</keyword>
<keyword id="KW-0375">Hydrogen ion transport</keyword>
<keyword id="KW-0406">Ion transport</keyword>
<keyword id="KW-0472">Membrane</keyword>
<keyword id="KW-0547">Nucleotide-binding</keyword>
<keyword id="KW-1278">Translocase</keyword>
<keyword id="KW-0813">Transport</keyword>
<dbReference type="EC" id="7.1.2.2" evidence="1"/>
<dbReference type="EMBL" id="AE017262">
    <property type="protein sequence ID" value="AAT02897.1"/>
    <property type="molecule type" value="Genomic_DNA"/>
</dbReference>
<dbReference type="SMR" id="Q724W4"/>
<dbReference type="KEGG" id="lmf:LMOf2365_0109"/>
<dbReference type="HOGENOM" id="CLU_022398_0_2_9"/>
<dbReference type="GO" id="GO:0005886">
    <property type="term" value="C:plasma membrane"/>
    <property type="evidence" value="ECO:0007669"/>
    <property type="project" value="UniProtKB-SubCell"/>
</dbReference>
<dbReference type="GO" id="GO:0045259">
    <property type="term" value="C:proton-transporting ATP synthase complex"/>
    <property type="evidence" value="ECO:0007669"/>
    <property type="project" value="UniProtKB-KW"/>
</dbReference>
<dbReference type="GO" id="GO:0005524">
    <property type="term" value="F:ATP binding"/>
    <property type="evidence" value="ECO:0007669"/>
    <property type="project" value="UniProtKB-UniRule"/>
</dbReference>
<dbReference type="GO" id="GO:0016887">
    <property type="term" value="F:ATP hydrolysis activity"/>
    <property type="evidence" value="ECO:0007669"/>
    <property type="project" value="InterPro"/>
</dbReference>
<dbReference type="GO" id="GO:0046933">
    <property type="term" value="F:proton-transporting ATP synthase activity, rotational mechanism"/>
    <property type="evidence" value="ECO:0007669"/>
    <property type="project" value="UniProtKB-UniRule"/>
</dbReference>
<dbReference type="CDD" id="cd18110">
    <property type="entry name" value="ATP-synt_F1_beta_C"/>
    <property type="match status" value="1"/>
</dbReference>
<dbReference type="CDD" id="cd18115">
    <property type="entry name" value="ATP-synt_F1_beta_N"/>
    <property type="match status" value="1"/>
</dbReference>
<dbReference type="CDD" id="cd01133">
    <property type="entry name" value="F1-ATPase_beta_CD"/>
    <property type="match status" value="1"/>
</dbReference>
<dbReference type="FunFam" id="1.10.1140.10:FF:000006">
    <property type="entry name" value="ATP synthase subunit beta"/>
    <property type="match status" value="1"/>
</dbReference>
<dbReference type="FunFam" id="3.40.50.300:FF:001630">
    <property type="entry name" value="ATP synthase subunit beta"/>
    <property type="match status" value="1"/>
</dbReference>
<dbReference type="Gene3D" id="2.40.10.170">
    <property type="match status" value="1"/>
</dbReference>
<dbReference type="Gene3D" id="1.10.1140.10">
    <property type="entry name" value="Bovine Mitochondrial F1-atpase, Atp Synthase Beta Chain, Chain D, domain 3"/>
    <property type="match status" value="1"/>
</dbReference>
<dbReference type="Gene3D" id="3.40.50.300">
    <property type="entry name" value="P-loop containing nucleotide triphosphate hydrolases"/>
    <property type="match status" value="1"/>
</dbReference>
<dbReference type="HAMAP" id="MF_01347">
    <property type="entry name" value="ATP_synth_beta_bact"/>
    <property type="match status" value="1"/>
</dbReference>
<dbReference type="InterPro" id="IPR003593">
    <property type="entry name" value="AAA+_ATPase"/>
</dbReference>
<dbReference type="InterPro" id="IPR055190">
    <property type="entry name" value="ATP-synt_VA_C"/>
</dbReference>
<dbReference type="InterPro" id="IPR005722">
    <property type="entry name" value="ATP_synth_F1_bsu"/>
</dbReference>
<dbReference type="InterPro" id="IPR020003">
    <property type="entry name" value="ATPase_a/bsu_AS"/>
</dbReference>
<dbReference type="InterPro" id="IPR050053">
    <property type="entry name" value="ATPase_alpha/beta_chains"/>
</dbReference>
<dbReference type="InterPro" id="IPR004100">
    <property type="entry name" value="ATPase_F1/V1/A1_a/bsu_N"/>
</dbReference>
<dbReference type="InterPro" id="IPR036121">
    <property type="entry name" value="ATPase_F1/V1/A1_a/bsu_N_sf"/>
</dbReference>
<dbReference type="InterPro" id="IPR000194">
    <property type="entry name" value="ATPase_F1/V1/A1_a/bsu_nucl-bd"/>
</dbReference>
<dbReference type="InterPro" id="IPR024034">
    <property type="entry name" value="ATPase_F1/V1_b/a_C"/>
</dbReference>
<dbReference type="InterPro" id="IPR027417">
    <property type="entry name" value="P-loop_NTPase"/>
</dbReference>
<dbReference type="NCBIfam" id="TIGR01039">
    <property type="entry name" value="atpD"/>
    <property type="match status" value="1"/>
</dbReference>
<dbReference type="PANTHER" id="PTHR15184">
    <property type="entry name" value="ATP SYNTHASE"/>
    <property type="match status" value="1"/>
</dbReference>
<dbReference type="PANTHER" id="PTHR15184:SF71">
    <property type="entry name" value="ATP SYNTHASE SUBUNIT BETA, MITOCHONDRIAL"/>
    <property type="match status" value="1"/>
</dbReference>
<dbReference type="Pfam" id="PF00006">
    <property type="entry name" value="ATP-synt_ab"/>
    <property type="match status" value="1"/>
</dbReference>
<dbReference type="Pfam" id="PF02874">
    <property type="entry name" value="ATP-synt_ab_N"/>
    <property type="match status" value="1"/>
</dbReference>
<dbReference type="Pfam" id="PF22919">
    <property type="entry name" value="ATP-synt_VA_C"/>
    <property type="match status" value="1"/>
</dbReference>
<dbReference type="SMART" id="SM00382">
    <property type="entry name" value="AAA"/>
    <property type="match status" value="1"/>
</dbReference>
<dbReference type="SUPFAM" id="SSF47917">
    <property type="entry name" value="C-terminal domain of alpha and beta subunits of F1 ATP synthase"/>
    <property type="match status" value="1"/>
</dbReference>
<dbReference type="SUPFAM" id="SSF50615">
    <property type="entry name" value="N-terminal domain of alpha and beta subunits of F1 ATP synthase"/>
    <property type="match status" value="1"/>
</dbReference>
<dbReference type="SUPFAM" id="SSF52540">
    <property type="entry name" value="P-loop containing nucleoside triphosphate hydrolases"/>
    <property type="match status" value="1"/>
</dbReference>
<dbReference type="PROSITE" id="PS00152">
    <property type="entry name" value="ATPASE_ALPHA_BETA"/>
    <property type="match status" value="1"/>
</dbReference>
<organism>
    <name type="scientific">Listeria monocytogenes serotype 4b (strain F2365)</name>
    <dbReference type="NCBI Taxonomy" id="265669"/>
    <lineage>
        <taxon>Bacteria</taxon>
        <taxon>Bacillati</taxon>
        <taxon>Bacillota</taxon>
        <taxon>Bacilli</taxon>
        <taxon>Bacillales</taxon>
        <taxon>Listeriaceae</taxon>
        <taxon>Listeria</taxon>
    </lineage>
</organism>
<gene>
    <name evidence="1" type="primary">atpD1</name>
    <name type="ordered locus">LMOf2365_0109</name>
</gene>
<name>ATPB1_LISMF</name>
<accession>Q724W4</accession>
<reference key="1">
    <citation type="journal article" date="2004" name="Nucleic Acids Res.">
        <title>Whole genome comparisons of serotype 4b and 1/2a strains of the food-borne pathogen Listeria monocytogenes reveal new insights into the core genome components of this species.</title>
        <authorList>
            <person name="Nelson K.E."/>
            <person name="Fouts D.E."/>
            <person name="Mongodin E.F."/>
            <person name="Ravel J."/>
            <person name="DeBoy R.T."/>
            <person name="Kolonay J.F."/>
            <person name="Rasko D.A."/>
            <person name="Angiuoli S.V."/>
            <person name="Gill S.R."/>
            <person name="Paulsen I.T."/>
            <person name="Peterson J.D."/>
            <person name="White O."/>
            <person name="Nelson W.C."/>
            <person name="Nierman W.C."/>
            <person name="Beanan M.J."/>
            <person name="Brinkac L.M."/>
            <person name="Daugherty S.C."/>
            <person name="Dodson R.J."/>
            <person name="Durkin A.S."/>
            <person name="Madupu R."/>
            <person name="Haft D.H."/>
            <person name="Selengut J."/>
            <person name="Van Aken S.E."/>
            <person name="Khouri H.M."/>
            <person name="Fedorova N."/>
            <person name="Forberger H.A."/>
            <person name="Tran B."/>
            <person name="Kathariou S."/>
            <person name="Wonderling L.D."/>
            <person name="Uhlich G.A."/>
            <person name="Bayles D.O."/>
            <person name="Luchansky J.B."/>
            <person name="Fraser C.M."/>
        </authorList>
    </citation>
    <scope>NUCLEOTIDE SEQUENCE [LARGE SCALE GENOMIC DNA]</scope>
    <source>
        <strain>F2365</strain>
    </source>
</reference>
<protein>
    <recommendedName>
        <fullName evidence="1">ATP synthase subunit beta 1</fullName>
        <ecNumber evidence="1">7.1.2.2</ecNumber>
    </recommendedName>
    <alternativeName>
        <fullName evidence="1">ATP synthase F1 sector subunit beta 1</fullName>
    </alternativeName>
    <alternativeName>
        <fullName evidence="1">F-ATPase subunit beta 1</fullName>
    </alternativeName>
</protein>
<feature type="chain" id="PRO_0000339539" description="ATP synthase subunit beta 1">
    <location>
        <begin position="1"/>
        <end position="456"/>
    </location>
</feature>
<feature type="binding site" evidence="1">
    <location>
        <begin position="152"/>
        <end position="159"/>
    </location>
    <ligand>
        <name>ATP</name>
        <dbReference type="ChEBI" id="CHEBI:30616"/>
    </ligand>
</feature>